<organism>
    <name type="scientific">Staphylococcus aureus (strain JH1)</name>
    <dbReference type="NCBI Taxonomy" id="359787"/>
    <lineage>
        <taxon>Bacteria</taxon>
        <taxon>Bacillati</taxon>
        <taxon>Bacillota</taxon>
        <taxon>Bacilli</taxon>
        <taxon>Bacillales</taxon>
        <taxon>Staphylococcaceae</taxon>
        <taxon>Staphylococcus</taxon>
    </lineage>
</organism>
<proteinExistence type="inferred from homology"/>
<keyword id="KW-0663">Pyridoxal phosphate</keyword>
<keyword id="KW-0808">Transferase</keyword>
<gene>
    <name type="primary">sbnA</name>
    <name type="ordered locus">SaurJH1_0107</name>
</gene>
<name>SBNA_STAA2</name>
<evidence type="ECO:0000250" key="1">
    <source>
        <dbReference type="UniProtKB" id="A6QDA0"/>
    </source>
</evidence>
<evidence type="ECO:0000250" key="2">
    <source>
        <dbReference type="UniProtKB" id="Q2G1N3"/>
    </source>
</evidence>
<evidence type="ECO:0000305" key="3"/>
<accession>A6TXQ1</accession>
<comment type="function">
    <text evidence="1">Catalyzes the synthesis of N-((2S)-2-amino-2-carboxyethyl)-L-glutamate (ACEGA) from O-phospho-L-serine and L-glutamate. Involved in the biosynthesis of L-2,3-diaminopropionic acid (L-Dap), a precursor of staphyloferrin B and antibiotics.</text>
</comment>
<comment type="catalytic activity">
    <reaction evidence="1">
        <text>O-phospho-L-serine + L-glutamate = N-[(2S)-2-amino-2-carboxyethyl]-L-glutamate + phosphate + H(+)</text>
        <dbReference type="Rhea" id="RHEA:52384"/>
        <dbReference type="ChEBI" id="CHEBI:15378"/>
        <dbReference type="ChEBI" id="CHEBI:29985"/>
        <dbReference type="ChEBI" id="CHEBI:43474"/>
        <dbReference type="ChEBI" id="CHEBI:57524"/>
        <dbReference type="ChEBI" id="CHEBI:134610"/>
        <dbReference type="EC" id="2.5.1.140"/>
    </reaction>
</comment>
<comment type="cofactor">
    <cofactor evidence="1">
        <name>pyridoxal 5'-phosphate</name>
        <dbReference type="ChEBI" id="CHEBI:597326"/>
    </cofactor>
</comment>
<comment type="pathway">
    <text evidence="1">Siderophore biosynthesis.</text>
</comment>
<comment type="subunit">
    <text evidence="1">Homodimer.</text>
</comment>
<comment type="induction">
    <text evidence="2">Up-regulated under iron-deficient growth conditions. Repressed by Fur under iron-rich growth conditions.</text>
</comment>
<comment type="similarity">
    <text evidence="3">Belongs to the cysteine synthase/cystathionine beta-synthase family. SbnA subfamily.</text>
</comment>
<protein>
    <recommendedName>
        <fullName evidence="3">N-(2-amino-2-carboxyethyl)-L-glutamate synthase</fullName>
        <shortName evidence="3">ACEGA synthase</shortName>
        <ecNumber evidence="1">2.5.1.140</ecNumber>
    </recommendedName>
</protein>
<reference key="1">
    <citation type="submission" date="2007-06" db="EMBL/GenBank/DDBJ databases">
        <title>Complete sequence of chromosome of Staphylococcus aureus subsp. aureus JH1.</title>
        <authorList>
            <consortium name="US DOE Joint Genome Institute"/>
            <person name="Copeland A."/>
            <person name="Lucas S."/>
            <person name="Lapidus A."/>
            <person name="Barry K."/>
            <person name="Detter J.C."/>
            <person name="Glavina del Rio T."/>
            <person name="Hammon N."/>
            <person name="Israni S."/>
            <person name="Dalin E."/>
            <person name="Tice H."/>
            <person name="Pitluck S."/>
            <person name="Chain P."/>
            <person name="Malfatti S."/>
            <person name="Shin M."/>
            <person name="Vergez L."/>
            <person name="Schmutz J."/>
            <person name="Larimer F."/>
            <person name="Land M."/>
            <person name="Hauser L."/>
            <person name="Kyrpides N."/>
            <person name="Ivanova N."/>
            <person name="Tomasz A."/>
            <person name="Richardson P."/>
        </authorList>
    </citation>
    <scope>NUCLEOTIDE SEQUENCE [LARGE SCALE GENOMIC DNA]</scope>
    <source>
        <strain>JH1</strain>
    </source>
</reference>
<feature type="chain" id="PRO_0000395014" description="N-(2-amino-2-carboxyethyl)-L-glutamate synthase">
    <location>
        <begin position="1"/>
        <end position="326"/>
    </location>
</feature>
<feature type="binding site" evidence="1">
    <location>
        <position position="77"/>
    </location>
    <ligand>
        <name>pyridoxal 5'-phosphate</name>
        <dbReference type="ChEBI" id="CHEBI:597326"/>
    </ligand>
</feature>
<feature type="binding site" evidence="1">
    <location>
        <begin position="185"/>
        <end position="189"/>
    </location>
    <ligand>
        <name>pyridoxal 5'-phosphate</name>
        <dbReference type="ChEBI" id="CHEBI:597326"/>
    </ligand>
</feature>
<feature type="binding site" evidence="1">
    <location>
        <position position="272"/>
    </location>
    <ligand>
        <name>pyridoxal 5'-phosphate</name>
        <dbReference type="ChEBI" id="CHEBI:597326"/>
    </ligand>
</feature>
<feature type="modified residue" description="N6-(pyridoxal phosphate)lysine" evidence="1">
    <location>
        <position position="47"/>
    </location>
</feature>
<dbReference type="EC" id="2.5.1.140" evidence="1"/>
<dbReference type="EMBL" id="CP000736">
    <property type="protein sequence ID" value="ABR50969.1"/>
    <property type="molecule type" value="Genomic_DNA"/>
</dbReference>
<dbReference type="SMR" id="A6TXQ1"/>
<dbReference type="KEGG" id="sah:SaurJH1_0107"/>
<dbReference type="HOGENOM" id="CLU_021018_1_0_9"/>
<dbReference type="GO" id="GO:0016765">
    <property type="term" value="F:transferase activity, transferring alkyl or aryl (other than methyl) groups"/>
    <property type="evidence" value="ECO:0007669"/>
    <property type="project" value="UniProtKB-ARBA"/>
</dbReference>
<dbReference type="GO" id="GO:0006535">
    <property type="term" value="P:cysteine biosynthetic process from serine"/>
    <property type="evidence" value="ECO:0007669"/>
    <property type="project" value="InterPro"/>
</dbReference>
<dbReference type="CDD" id="cd01561">
    <property type="entry name" value="CBS_like"/>
    <property type="match status" value="1"/>
</dbReference>
<dbReference type="Gene3D" id="3.40.50.1100">
    <property type="match status" value="2"/>
</dbReference>
<dbReference type="InterPro" id="IPR050214">
    <property type="entry name" value="Cys_Synth/Cystath_Beta-Synth"/>
</dbReference>
<dbReference type="InterPro" id="IPR001216">
    <property type="entry name" value="P-phosphate_BS"/>
</dbReference>
<dbReference type="InterPro" id="IPR023927">
    <property type="entry name" value="SbnA"/>
</dbReference>
<dbReference type="InterPro" id="IPR001926">
    <property type="entry name" value="TrpB-like_PALP"/>
</dbReference>
<dbReference type="InterPro" id="IPR036052">
    <property type="entry name" value="TrpB-like_PALP_sf"/>
</dbReference>
<dbReference type="NCBIfam" id="TIGR03945">
    <property type="entry name" value="PLP_SbnA_fam"/>
    <property type="match status" value="1"/>
</dbReference>
<dbReference type="PANTHER" id="PTHR10314">
    <property type="entry name" value="CYSTATHIONINE BETA-SYNTHASE"/>
    <property type="match status" value="1"/>
</dbReference>
<dbReference type="Pfam" id="PF00291">
    <property type="entry name" value="PALP"/>
    <property type="match status" value="1"/>
</dbReference>
<dbReference type="SUPFAM" id="SSF53686">
    <property type="entry name" value="Tryptophan synthase beta subunit-like PLP-dependent enzymes"/>
    <property type="match status" value="1"/>
</dbReference>
<dbReference type="PROSITE" id="PS00901">
    <property type="entry name" value="CYS_SYNTHASE"/>
    <property type="match status" value="1"/>
</dbReference>
<sequence length="326" mass="35897">MIEKSQACHDSLLDSVGQTPMVQLHQLFPKHEVFAKLEYMNPGGSMKDRPAKYIIEHGIKHGLITENTHLIESTSGNLGIALAMIAKIKGLKLTCVVDPKISPTNLKIIKSYGANVEMVEEPDAHGGYLMTRIAKVQELLATIDDAYWINQYANELNWQSHYHGAGTEIVETIKQPIDYFVAPVSTTGSIMGMSRKIKEVHPNAQIVAVDAKGSVIFGDKPINRELPGIGASRVPEILNRSEINQVIHVDDYQSALGCRKLIDYEGIFAGGSTGSIIAAIEQLITSIEEGATIVTILPDRGDRYLDLVYSDTWLEKMKSRQGVKSE</sequence>